<feature type="chain" id="PRO_0000153568" description="Ig alpha chain C region">
    <location>
        <begin position="1" status="less than"/>
        <end position="344"/>
    </location>
</feature>
<feature type="domain" description="Ig-like 1">
    <location>
        <begin position="6"/>
        <end position="99"/>
    </location>
</feature>
<feature type="domain" description="Ig-like 2">
    <location>
        <begin position="116"/>
        <end position="206"/>
    </location>
</feature>
<feature type="domain" description="Ig-like 3">
    <location>
        <begin position="219"/>
        <end position="321"/>
    </location>
</feature>
<feature type="glycosylation site" description="N-linked (GlcNAc...) asparagine" evidence="3 4">
    <location>
        <position position="38"/>
    </location>
</feature>
<feature type="glycosylation site" description="N-linked (GlcNAc...) asparagine" evidence="1">
    <location>
        <position position="99"/>
    </location>
</feature>
<feature type="glycosylation site" description="O-linked (GalNAc) serine; in variant MOPC 47A">
    <location>
        <position position="101"/>
    </location>
</feature>
<feature type="glycosylation site" description="N-linked (GlcNAc...) asparagine" evidence="1">
    <location>
        <position position="329"/>
    </location>
</feature>
<feature type="glycosylation site" description="N-linked (GlcNAc...) asparagine; in variant M511" evidence="4">
    <location>
        <position position="331"/>
    </location>
</feature>
<feature type="disulfide bond" evidence="2">
    <location>
        <begin position="26"/>
        <end position="84"/>
    </location>
</feature>
<feature type="disulfide bond" evidence="2">
    <location>
        <begin position="76"/>
        <end position="100"/>
    </location>
</feature>
<feature type="disulfide bond" evidence="2">
    <location>
        <begin position="114"/>
        <end position="171"/>
    </location>
</feature>
<feature type="disulfide bond" evidence="2">
    <location>
        <begin position="138"/>
        <end position="195"/>
    </location>
</feature>
<feature type="sequence variant" description="In MOPC 47A.">
    <original>S</original>
    <variation>A</variation>
    <location>
        <position position="2"/>
    </location>
</feature>
<feature type="sequence variant" description="In MOPC 47A and M511.">
    <original>S</original>
    <variation>C</variation>
    <location>
        <position position="18"/>
    </location>
</feature>
<feature type="sequence variant" description="In MOPC 47A and M511.">
    <original>N</original>
    <variation>S</variation>
    <location>
        <position position="67"/>
    </location>
</feature>
<feature type="sequence variant" description="In MOPC 47A.">
    <original>A</original>
    <variation>T</variation>
    <location>
        <position position="73"/>
    </location>
</feature>
<feature type="sequence variant" description="In M511; requires 2 nucleotide substitutions.">
    <original>P</original>
    <variation>G</variation>
    <location>
        <position position="112"/>
    </location>
</feature>
<feature type="sequence variant" description="In MOPC 47A and M511; requires 2 nucleotide substitutions.">
    <original>S</original>
    <variation>Q</variation>
    <location>
        <position position="135"/>
    </location>
</feature>
<feature type="sequence variant" description="In MOPC 47A and M511.">
    <original>N</original>
    <variation>D</variation>
    <location>
        <position position="141"/>
    </location>
</feature>
<feature type="sequence variant" description="In MOPC 47A.">
    <original>Q</original>
    <variation>E</variation>
    <location>
        <position position="168"/>
    </location>
</feature>
<feature type="sequence variant" description="In MOPC 47A.">
    <original>VT</original>
    <variation>SQ</variation>
    <location>
        <begin position="212"/>
        <end position="213"/>
    </location>
</feature>
<feature type="sequence variant" description="In M511.">
    <original>E</original>
    <variation>G</variation>
    <location>
        <position position="235"/>
    </location>
</feature>
<feature type="sequence variant" description="In M511.">
    <location>
        <begin position="255"/>
        <end position="290"/>
    </location>
</feature>
<feature type="sequence variant" description="In M511; requires 2 nucleotide substitutions.">
    <original>T</original>
    <variation>D</variation>
    <location>
        <position position="295"/>
    </location>
</feature>
<feature type="sequence variant" description="In M511; requires 2 nucleotide substitutions.">
    <original>Q</original>
    <variation>G</variation>
    <location>
        <position position="301"/>
    </location>
</feature>
<feature type="sequence variant" description="In M511; requires 2 nucleotide substitutions.">
    <original>N</original>
    <variation>Q</variation>
    <location>
        <position position="329"/>
    </location>
</feature>
<feature type="sequence variant" description="In M511.">
    <original>S</original>
    <variation>N</variation>
    <location>
        <position position="331"/>
    </location>
</feature>
<feature type="non-terminal residue">
    <location>
        <position position="1"/>
    </location>
</feature>
<feature type="strand" evidence="6">
    <location>
        <begin position="117"/>
        <end position="121"/>
    </location>
</feature>
<feature type="helix" evidence="6">
    <location>
        <begin position="125"/>
        <end position="129"/>
    </location>
</feature>
<feature type="strand" evidence="6">
    <location>
        <begin position="135"/>
        <end position="142"/>
    </location>
</feature>
<feature type="strand" evidence="6">
    <location>
        <begin position="150"/>
        <end position="153"/>
    </location>
</feature>
<feature type="strand" evidence="6">
    <location>
        <begin position="174"/>
        <end position="181"/>
    </location>
</feature>
<feature type="helix" evidence="6">
    <location>
        <begin position="185"/>
        <end position="188"/>
    </location>
</feature>
<feature type="strand" evidence="6">
    <location>
        <begin position="193"/>
        <end position="198"/>
    </location>
</feature>
<feature type="strand" evidence="7">
    <location>
        <begin position="200"/>
        <end position="202"/>
    </location>
</feature>
<feature type="strand" evidence="6">
    <location>
        <begin position="204"/>
        <end position="209"/>
    </location>
</feature>
<feature type="strand" evidence="6">
    <location>
        <begin position="220"/>
        <end position="224"/>
    </location>
</feature>
<feature type="helix" evidence="6">
    <location>
        <begin position="228"/>
        <end position="231"/>
    </location>
</feature>
<feature type="strand" evidence="6">
    <location>
        <begin position="235"/>
        <end position="246"/>
    </location>
</feature>
<feature type="strand" evidence="7">
    <location>
        <begin position="247"/>
        <end position="249"/>
    </location>
</feature>
<feature type="strand" evidence="6">
    <location>
        <begin position="252"/>
        <end position="256"/>
    </location>
</feature>
<feature type="strand" evidence="6">
    <location>
        <begin position="258"/>
        <end position="261"/>
    </location>
</feature>
<feature type="helix" evidence="6">
    <location>
        <begin position="264"/>
        <end position="266"/>
    </location>
</feature>
<feature type="strand" evidence="6">
    <location>
        <begin position="267"/>
        <end position="269"/>
    </location>
</feature>
<feature type="strand" evidence="6">
    <location>
        <begin position="276"/>
        <end position="280"/>
    </location>
</feature>
<feature type="strand" evidence="6">
    <location>
        <begin position="283"/>
        <end position="292"/>
    </location>
</feature>
<feature type="helix" evidence="6">
    <location>
        <begin position="293"/>
        <end position="297"/>
    </location>
</feature>
<feature type="strand" evidence="6">
    <location>
        <begin position="302"/>
        <end position="307"/>
    </location>
</feature>
<feature type="strand" evidence="6">
    <location>
        <begin position="309"/>
        <end position="320"/>
    </location>
</feature>
<feature type="strand" evidence="6">
    <location>
        <begin position="328"/>
        <end position="341"/>
    </location>
</feature>
<proteinExistence type="evidence at protein level"/>
<comment type="function">
    <text>Ig alpha is the major immunoglobulin class in body secretions. It may serve both to defend against local infection and to prevent access of foreign antigens to the general immunologic system.</text>
</comment>
<comment type="miscellaneous">
    <text>The final C-region domain is deleted from PubMed:115869 chain. It was isolated from a myeloma protein that contains 1 light and 1 heavy chain per molecule, linked by a disulfide bond. In contrast, normal mouse IgA molecules contain 2 light and 2 heavy chains and lack a light-heavy chain disulfide bond.</text>
</comment>
<comment type="miscellaneous">
    <text>M511 chain was isolated from a myeloma protein that binds phosphorylcholine.</text>
</comment>
<comment type="miscellaneous">
    <text>M511 sequence was compared with that of mouse MOPC 47A, and a genetic mechanism for the deletion of the CH3 domain of the mutant chain is proposed.</text>
</comment>
<comment type="sequence caution" evidence="5">
    <conflict type="erroneous initiation">
        <sequence resource="EMBL-CDS" id="BAA02026"/>
    </conflict>
</comment>
<accession>P01878</accession>
<sequence>ESARNPTIYPLTLPPALSSDPVIIGCLIHDYFPSGTMNVTWGKSGKDITTVNFPPALASGGRYTMSNQLTLPAVECPEGESVKCSVQHDSNPVQELDVNCSGPTPPPPITIPSCQPSLSLQRPALEDLLLGSDASITCTLNGLRNPEGAVFTWEPSTGKDAVQKKAVQNSCGCYSVSSVLPGCAERWNSGASFKCTVTHPESGTLTGTIAKVTVNTFPPQVHLLPPPSEELALNELLSLTCLVRAFNPKEVLVRWLHGNEELSPESYLVFEPLKEPGEGATTYLVTSVLRVSAETWKQGDQYSCMVGHEALPMNFTQKTIDRLSGKPTNVSVSVIMSEGDGICY</sequence>
<keyword id="KW-0002">3D-structure</keyword>
<keyword id="KW-0903">Direct protein sequencing</keyword>
<keyword id="KW-1015">Disulfide bond</keyword>
<keyword id="KW-0325">Glycoprotein</keyword>
<keyword id="KW-0393">Immunoglobulin domain</keyword>
<keyword id="KW-1185">Reference proteome</keyword>
<keyword id="KW-0677">Repeat</keyword>
<protein>
    <recommendedName>
        <fullName>Ig alpha chain C region</fullName>
    </recommendedName>
</protein>
<organism>
    <name type="scientific">Mus musculus</name>
    <name type="common">Mouse</name>
    <dbReference type="NCBI Taxonomy" id="10090"/>
    <lineage>
        <taxon>Eukaryota</taxon>
        <taxon>Metazoa</taxon>
        <taxon>Chordata</taxon>
        <taxon>Craniata</taxon>
        <taxon>Vertebrata</taxon>
        <taxon>Euteleostomi</taxon>
        <taxon>Mammalia</taxon>
        <taxon>Eutheria</taxon>
        <taxon>Euarchontoglires</taxon>
        <taxon>Glires</taxon>
        <taxon>Rodentia</taxon>
        <taxon>Myomorpha</taxon>
        <taxon>Muroidea</taxon>
        <taxon>Muridae</taxon>
        <taxon>Murinae</taxon>
        <taxon>Mus</taxon>
        <taxon>Mus</taxon>
    </lineage>
</organism>
<name>IGHA_MOUSE</name>
<dbReference type="EMBL" id="D11468">
    <property type="protein sequence ID" value="BAA02026.1"/>
    <property type="status" value="ALT_INIT"/>
    <property type="molecule type" value="Genomic_DNA"/>
</dbReference>
<dbReference type="PIR" id="A91479">
    <property type="entry name" value="AHMS"/>
</dbReference>
<dbReference type="PDB" id="7JG1">
    <property type="method" value="EM"/>
    <property type="resolution" value="3.30 A"/>
    <property type="chains" value="A/B/C/D=1-344"/>
</dbReference>
<dbReference type="PDB" id="7JG2">
    <property type="method" value="EM"/>
    <property type="resolution" value="3.30 A"/>
    <property type="chains" value="A/B/C/D=1-344"/>
</dbReference>
<dbReference type="PDBsum" id="7JG1"/>
<dbReference type="PDBsum" id="7JG2"/>
<dbReference type="SMR" id="P01878"/>
<dbReference type="FunCoup" id="P01878">
    <property type="interactions" value="37"/>
</dbReference>
<dbReference type="GlyGen" id="P01878">
    <property type="glycosylation" value="6 sites, 1 O-linked glycan (1 site)"/>
</dbReference>
<dbReference type="iPTMnet" id="P01878"/>
<dbReference type="SwissPalm" id="P01878"/>
<dbReference type="CPTAC" id="non-CPTAC-3828"/>
<dbReference type="jPOST" id="P01878"/>
<dbReference type="PeptideAtlas" id="P01878"/>
<dbReference type="InParanoid" id="P01878"/>
<dbReference type="Proteomes" id="UP000000589">
    <property type="component" value="Unplaced"/>
</dbReference>
<dbReference type="RNAct" id="P01878">
    <property type="molecule type" value="protein"/>
</dbReference>
<dbReference type="GO" id="GO:0042571">
    <property type="term" value="C:immunoglobulin complex, circulating"/>
    <property type="evidence" value="ECO:0000318"/>
    <property type="project" value="GO_Central"/>
</dbReference>
<dbReference type="GO" id="GO:0003823">
    <property type="term" value="F:antigen binding"/>
    <property type="evidence" value="ECO:0000318"/>
    <property type="project" value="GO_Central"/>
</dbReference>
<dbReference type="GO" id="GO:0034987">
    <property type="term" value="F:immunoglobulin receptor binding"/>
    <property type="evidence" value="ECO:0000353"/>
    <property type="project" value="AgBase"/>
</dbReference>
<dbReference type="GO" id="GO:0019731">
    <property type="term" value="P:antibacterial humoral response"/>
    <property type="evidence" value="ECO:0000318"/>
    <property type="project" value="GO_Central"/>
</dbReference>
<dbReference type="GO" id="GO:0006958">
    <property type="term" value="P:complement activation, classical pathway"/>
    <property type="evidence" value="ECO:0000318"/>
    <property type="project" value="GO_Central"/>
</dbReference>
<dbReference type="CDD" id="cd21818">
    <property type="entry name" value="IgC1_CH1_IgA"/>
    <property type="match status" value="1"/>
</dbReference>
<dbReference type="CDD" id="cd04986">
    <property type="entry name" value="IgC1_CH2_IgA"/>
    <property type="match status" value="1"/>
</dbReference>
<dbReference type="CDD" id="cd05768">
    <property type="entry name" value="IgC1_CH3_IgAGD_CH4_IgAEM"/>
    <property type="match status" value="1"/>
</dbReference>
<dbReference type="FunFam" id="2.60.40.10:FF:002016">
    <property type="entry name" value="Immunoglobulin heavy constant alpha 2"/>
    <property type="match status" value="1"/>
</dbReference>
<dbReference type="FunFam" id="2.60.40.10:FF:000998">
    <property type="entry name" value="Immunoglobulin heavy constant epsilon"/>
    <property type="match status" value="1"/>
</dbReference>
<dbReference type="FunFam" id="2.60.40.10:FF:000463">
    <property type="entry name" value="Immunoglobulin heavy constant gamma 1"/>
    <property type="match status" value="1"/>
</dbReference>
<dbReference type="Gene3D" id="2.60.40.10">
    <property type="entry name" value="Immunoglobulins"/>
    <property type="match status" value="3"/>
</dbReference>
<dbReference type="InterPro" id="IPR007110">
    <property type="entry name" value="Ig-like_dom"/>
</dbReference>
<dbReference type="InterPro" id="IPR036179">
    <property type="entry name" value="Ig-like_dom_sf"/>
</dbReference>
<dbReference type="InterPro" id="IPR013783">
    <property type="entry name" value="Ig-like_fold"/>
</dbReference>
<dbReference type="InterPro" id="IPR003006">
    <property type="entry name" value="Ig/MHC_CS"/>
</dbReference>
<dbReference type="InterPro" id="IPR003597">
    <property type="entry name" value="Ig_C1-set"/>
</dbReference>
<dbReference type="InterPro" id="IPR003599">
    <property type="entry name" value="Ig_sub"/>
</dbReference>
<dbReference type="InterPro" id="IPR050380">
    <property type="entry name" value="Immune_Resp_Modulators"/>
</dbReference>
<dbReference type="PANTHER" id="PTHR23411">
    <property type="entry name" value="TAPASIN"/>
    <property type="match status" value="1"/>
</dbReference>
<dbReference type="Pfam" id="PF07654">
    <property type="entry name" value="C1-set"/>
    <property type="match status" value="3"/>
</dbReference>
<dbReference type="SMART" id="SM00409">
    <property type="entry name" value="IG"/>
    <property type="match status" value="2"/>
</dbReference>
<dbReference type="SMART" id="SM00407">
    <property type="entry name" value="IGc1"/>
    <property type="match status" value="3"/>
</dbReference>
<dbReference type="SUPFAM" id="SSF48726">
    <property type="entry name" value="Immunoglobulin"/>
    <property type="match status" value="3"/>
</dbReference>
<dbReference type="PROSITE" id="PS50835">
    <property type="entry name" value="IG_LIKE"/>
    <property type="match status" value="3"/>
</dbReference>
<dbReference type="PROSITE" id="PS00290">
    <property type="entry name" value="IG_MHC"/>
    <property type="match status" value="2"/>
</dbReference>
<evidence type="ECO:0000255" key="1"/>
<evidence type="ECO:0000255" key="2">
    <source>
        <dbReference type="PROSITE-ProRule" id="PRU00114"/>
    </source>
</evidence>
<evidence type="ECO:0000269" key="3">
    <source>
    </source>
</evidence>
<evidence type="ECO:0000269" key="4">
    <source>
    </source>
</evidence>
<evidence type="ECO:0000305" key="5"/>
<evidence type="ECO:0007829" key="6">
    <source>
        <dbReference type="PDB" id="7JG1"/>
    </source>
</evidence>
<evidence type="ECO:0007829" key="7">
    <source>
        <dbReference type="PDB" id="7JG2"/>
    </source>
</evidence>
<reference key="1">
    <citation type="journal article" date="1981" name="Gene">
        <title>Mouse immunoglobulin A: nucleotide sequence of the structural gene for the alpha heavy chain derived from cloned cDNAs.</title>
        <authorList>
            <person name="Auffray C."/>
            <person name="Nageotte R."/>
            <person name="Sikorav J.-L."/>
            <person name="Heidmann O."/>
            <person name="Rougeon F."/>
        </authorList>
    </citation>
    <scope>NUCLEOTIDE SEQUENCE [GENOMIC DNA] (MYELOMAS ABE48 AND J558)</scope>
</reference>
<reference key="2">
    <citation type="journal article" date="1979" name="J. Biol. Chem.">
        <title>Amino acid sequence of a mouse myeloma immunoglobin heavy chain (MOPC 47 A) with a 100-residue deletion.</title>
        <authorList>
            <person name="Robinson E.A."/>
            <person name="Appella E."/>
        </authorList>
    </citation>
    <scope>PROTEIN SEQUENCE OF 1-213 (MOPC 47A)</scope>
</reference>
<reference key="3">
    <citation type="journal article" date="1980" name="Proc. Natl. Acad. Sci. U.S.A.">
        <title>Complete amino acid sequence of a mouse immunoglobulin alpha chain (MOPC 511).</title>
        <authorList>
            <person name="Robinson E.A."/>
            <person name="Appella E."/>
        </authorList>
    </citation>
    <scope>PROTEIN SEQUENCE OF 1-254 AND 291-344 (M511)</scope>
    <scope>GLYCOSYLATION AT ASN-331 (VARIANT ASN-331)</scope>
</reference>
<reference key="4">
    <citation type="journal article" date="2007" name="J. Proteome Res.">
        <title>Enhanced analysis of the mouse plasma proteome using cysteine-containing tryptic glycopeptides.</title>
        <authorList>
            <person name="Bernhard O.K."/>
            <person name="Kapp E.A."/>
            <person name="Simpson R.J."/>
        </authorList>
    </citation>
    <scope>GLYCOSYLATION [LARGE SCALE ANALYSIS] AT ASN-38</scope>
    <source>
        <strain>C57BL/6J</strain>
        <tissue>Plasma</tissue>
    </source>
</reference>